<name>SUCC_BACC2</name>
<keyword id="KW-0067">ATP-binding</keyword>
<keyword id="KW-0436">Ligase</keyword>
<keyword id="KW-0460">Magnesium</keyword>
<keyword id="KW-0479">Metal-binding</keyword>
<keyword id="KW-0547">Nucleotide-binding</keyword>
<keyword id="KW-0816">Tricarboxylic acid cycle</keyword>
<protein>
    <recommendedName>
        <fullName evidence="1">Succinate--CoA ligase [ADP-forming] subunit beta</fullName>
        <ecNumber evidence="1">6.2.1.5</ecNumber>
    </recommendedName>
    <alternativeName>
        <fullName evidence="1">Succinyl-CoA synthetase subunit beta</fullName>
        <shortName evidence="1">SCS-beta</shortName>
    </alternativeName>
</protein>
<reference key="1">
    <citation type="submission" date="2008-10" db="EMBL/GenBank/DDBJ databases">
        <title>Genome sequence of Bacillus cereus G9842.</title>
        <authorList>
            <person name="Dodson R.J."/>
            <person name="Durkin A.S."/>
            <person name="Rosovitz M.J."/>
            <person name="Rasko D.A."/>
            <person name="Hoffmaster A."/>
            <person name="Ravel J."/>
            <person name="Sutton G."/>
        </authorList>
    </citation>
    <scope>NUCLEOTIDE SEQUENCE [LARGE SCALE GENOMIC DNA]</scope>
    <source>
        <strain>G9842</strain>
    </source>
</reference>
<gene>
    <name evidence="1" type="primary">sucC</name>
    <name type="ordered locus">BCG9842_B1309</name>
</gene>
<accession>B7IUJ5</accession>
<organism>
    <name type="scientific">Bacillus cereus (strain G9842)</name>
    <dbReference type="NCBI Taxonomy" id="405531"/>
    <lineage>
        <taxon>Bacteria</taxon>
        <taxon>Bacillati</taxon>
        <taxon>Bacillota</taxon>
        <taxon>Bacilli</taxon>
        <taxon>Bacillales</taxon>
        <taxon>Bacillaceae</taxon>
        <taxon>Bacillus</taxon>
        <taxon>Bacillus cereus group</taxon>
    </lineage>
</organism>
<comment type="function">
    <text evidence="1">Succinyl-CoA synthetase functions in the citric acid cycle (TCA), coupling the hydrolysis of succinyl-CoA to the synthesis of either ATP or GTP and thus represents the only step of substrate-level phosphorylation in the TCA. The beta subunit provides nucleotide specificity of the enzyme and binds the substrate succinate, while the binding sites for coenzyme A and phosphate are found in the alpha subunit.</text>
</comment>
<comment type="catalytic activity">
    <reaction evidence="1">
        <text>succinate + ATP + CoA = succinyl-CoA + ADP + phosphate</text>
        <dbReference type="Rhea" id="RHEA:17661"/>
        <dbReference type="ChEBI" id="CHEBI:30031"/>
        <dbReference type="ChEBI" id="CHEBI:30616"/>
        <dbReference type="ChEBI" id="CHEBI:43474"/>
        <dbReference type="ChEBI" id="CHEBI:57287"/>
        <dbReference type="ChEBI" id="CHEBI:57292"/>
        <dbReference type="ChEBI" id="CHEBI:456216"/>
        <dbReference type="EC" id="6.2.1.5"/>
    </reaction>
    <physiologicalReaction direction="right-to-left" evidence="1">
        <dbReference type="Rhea" id="RHEA:17663"/>
    </physiologicalReaction>
</comment>
<comment type="catalytic activity">
    <reaction evidence="1">
        <text>GTP + succinate + CoA = succinyl-CoA + GDP + phosphate</text>
        <dbReference type="Rhea" id="RHEA:22120"/>
        <dbReference type="ChEBI" id="CHEBI:30031"/>
        <dbReference type="ChEBI" id="CHEBI:37565"/>
        <dbReference type="ChEBI" id="CHEBI:43474"/>
        <dbReference type="ChEBI" id="CHEBI:57287"/>
        <dbReference type="ChEBI" id="CHEBI:57292"/>
        <dbReference type="ChEBI" id="CHEBI:58189"/>
    </reaction>
    <physiologicalReaction direction="right-to-left" evidence="1">
        <dbReference type="Rhea" id="RHEA:22122"/>
    </physiologicalReaction>
</comment>
<comment type="cofactor">
    <cofactor evidence="1">
        <name>Mg(2+)</name>
        <dbReference type="ChEBI" id="CHEBI:18420"/>
    </cofactor>
    <text evidence="1">Binds 1 Mg(2+) ion per subunit.</text>
</comment>
<comment type="pathway">
    <text evidence="1">Carbohydrate metabolism; tricarboxylic acid cycle; succinate from succinyl-CoA (ligase route): step 1/1.</text>
</comment>
<comment type="subunit">
    <text evidence="1">Heterotetramer of two alpha and two beta subunits.</text>
</comment>
<comment type="similarity">
    <text evidence="1">Belongs to the succinate/malate CoA ligase beta subunit family.</text>
</comment>
<proteinExistence type="inferred from homology"/>
<sequence>MNIHEYQGKAVLRSYGVSVPNGKVAFTVEEAVEAAKELGTDVCVVKAQIHAGGRGKAGGVKVAKNLDEVRTYAESILGTTLVTHQTGPEGKEVKRLLIEEGCDIKKEYYVGLVLDRATSQVVLMASEEGGTEIEEVAEKTPEKIFKEYIDPAVGLQGFQARRIAFNIHIPKELVGQAVKFMMGLYRAFIEKDCSIAEINPLVTTGEGKVMALDAKLNFDSNALYRHKDILELRDLDEEDSKEIEASKYDLNYIPLDGNIGCMVNGAGLAMATMDIIKHYHGDPANFLDVGGGATAEKVTEAFKIILSDKNVKGIFVNIFGGIMKCDVIAEGVIEATKQVGLELPLVVRLEGTNVELGKKILNESGLNIVAAESMADGAQKIVSLVG</sequence>
<evidence type="ECO:0000255" key="1">
    <source>
        <dbReference type="HAMAP-Rule" id="MF_00558"/>
    </source>
</evidence>
<feature type="chain" id="PRO_1000129159" description="Succinate--CoA ligase [ADP-forming] subunit beta">
    <location>
        <begin position="1"/>
        <end position="386"/>
    </location>
</feature>
<feature type="domain" description="ATP-grasp" evidence="1">
    <location>
        <begin position="9"/>
        <end position="244"/>
    </location>
</feature>
<feature type="binding site" evidence="1">
    <location>
        <position position="46"/>
    </location>
    <ligand>
        <name>ATP</name>
        <dbReference type="ChEBI" id="CHEBI:30616"/>
    </ligand>
</feature>
<feature type="binding site" evidence="1">
    <location>
        <begin position="53"/>
        <end position="55"/>
    </location>
    <ligand>
        <name>ATP</name>
        <dbReference type="ChEBI" id="CHEBI:30616"/>
    </ligand>
</feature>
<feature type="binding site" evidence="1">
    <location>
        <position position="99"/>
    </location>
    <ligand>
        <name>ATP</name>
        <dbReference type="ChEBI" id="CHEBI:30616"/>
    </ligand>
</feature>
<feature type="binding site" evidence="1">
    <location>
        <position position="102"/>
    </location>
    <ligand>
        <name>ATP</name>
        <dbReference type="ChEBI" id="CHEBI:30616"/>
    </ligand>
</feature>
<feature type="binding site" evidence="1">
    <location>
        <position position="107"/>
    </location>
    <ligand>
        <name>ATP</name>
        <dbReference type="ChEBI" id="CHEBI:30616"/>
    </ligand>
</feature>
<feature type="binding site" evidence="1">
    <location>
        <position position="199"/>
    </location>
    <ligand>
        <name>Mg(2+)</name>
        <dbReference type="ChEBI" id="CHEBI:18420"/>
    </ligand>
</feature>
<feature type="binding site" evidence="1">
    <location>
        <position position="213"/>
    </location>
    <ligand>
        <name>Mg(2+)</name>
        <dbReference type="ChEBI" id="CHEBI:18420"/>
    </ligand>
</feature>
<feature type="binding site" evidence="1">
    <location>
        <position position="264"/>
    </location>
    <ligand>
        <name>substrate</name>
        <note>ligand shared with subunit alpha</note>
    </ligand>
</feature>
<feature type="binding site" evidence="1">
    <location>
        <begin position="321"/>
        <end position="323"/>
    </location>
    <ligand>
        <name>substrate</name>
        <note>ligand shared with subunit alpha</note>
    </ligand>
</feature>
<dbReference type="EC" id="6.2.1.5" evidence="1"/>
<dbReference type="EMBL" id="CP001186">
    <property type="protein sequence ID" value="ACK94389.1"/>
    <property type="molecule type" value="Genomic_DNA"/>
</dbReference>
<dbReference type="RefSeq" id="WP_001020784.1">
    <property type="nucleotide sequence ID" value="NC_011772.1"/>
</dbReference>
<dbReference type="SMR" id="B7IUJ5"/>
<dbReference type="KEGG" id="bcg:BCG9842_B1309"/>
<dbReference type="HOGENOM" id="CLU_037430_0_2_9"/>
<dbReference type="UniPathway" id="UPA00223">
    <property type="reaction ID" value="UER00999"/>
</dbReference>
<dbReference type="Proteomes" id="UP000006744">
    <property type="component" value="Chromosome"/>
</dbReference>
<dbReference type="GO" id="GO:0005829">
    <property type="term" value="C:cytosol"/>
    <property type="evidence" value="ECO:0007669"/>
    <property type="project" value="TreeGrafter"/>
</dbReference>
<dbReference type="GO" id="GO:0042709">
    <property type="term" value="C:succinate-CoA ligase complex"/>
    <property type="evidence" value="ECO:0007669"/>
    <property type="project" value="TreeGrafter"/>
</dbReference>
<dbReference type="GO" id="GO:0005524">
    <property type="term" value="F:ATP binding"/>
    <property type="evidence" value="ECO:0007669"/>
    <property type="project" value="UniProtKB-UniRule"/>
</dbReference>
<dbReference type="GO" id="GO:0000287">
    <property type="term" value="F:magnesium ion binding"/>
    <property type="evidence" value="ECO:0007669"/>
    <property type="project" value="UniProtKB-UniRule"/>
</dbReference>
<dbReference type="GO" id="GO:0004775">
    <property type="term" value="F:succinate-CoA ligase (ADP-forming) activity"/>
    <property type="evidence" value="ECO:0007669"/>
    <property type="project" value="UniProtKB-UniRule"/>
</dbReference>
<dbReference type="GO" id="GO:0004776">
    <property type="term" value="F:succinate-CoA ligase (GDP-forming) activity"/>
    <property type="evidence" value="ECO:0007669"/>
    <property type="project" value="RHEA"/>
</dbReference>
<dbReference type="GO" id="GO:0006104">
    <property type="term" value="P:succinyl-CoA metabolic process"/>
    <property type="evidence" value="ECO:0007669"/>
    <property type="project" value="TreeGrafter"/>
</dbReference>
<dbReference type="GO" id="GO:0006099">
    <property type="term" value="P:tricarboxylic acid cycle"/>
    <property type="evidence" value="ECO:0007669"/>
    <property type="project" value="UniProtKB-UniRule"/>
</dbReference>
<dbReference type="FunFam" id="3.30.1490.20:FF:000002">
    <property type="entry name" value="Succinate--CoA ligase [ADP-forming] subunit beta"/>
    <property type="match status" value="1"/>
</dbReference>
<dbReference type="FunFam" id="3.30.470.20:FF:000002">
    <property type="entry name" value="Succinate--CoA ligase [ADP-forming] subunit beta"/>
    <property type="match status" value="1"/>
</dbReference>
<dbReference type="FunFam" id="3.40.50.261:FF:000001">
    <property type="entry name" value="Succinate--CoA ligase [ADP-forming] subunit beta"/>
    <property type="match status" value="1"/>
</dbReference>
<dbReference type="Gene3D" id="3.30.1490.20">
    <property type="entry name" value="ATP-grasp fold, A domain"/>
    <property type="match status" value="1"/>
</dbReference>
<dbReference type="Gene3D" id="3.30.470.20">
    <property type="entry name" value="ATP-grasp fold, B domain"/>
    <property type="match status" value="1"/>
</dbReference>
<dbReference type="Gene3D" id="3.40.50.261">
    <property type="entry name" value="Succinyl-CoA synthetase domains"/>
    <property type="match status" value="1"/>
</dbReference>
<dbReference type="HAMAP" id="MF_00558">
    <property type="entry name" value="Succ_CoA_beta"/>
    <property type="match status" value="1"/>
</dbReference>
<dbReference type="InterPro" id="IPR011761">
    <property type="entry name" value="ATP-grasp"/>
</dbReference>
<dbReference type="InterPro" id="IPR013650">
    <property type="entry name" value="ATP-grasp_succ-CoA_synth-type"/>
</dbReference>
<dbReference type="InterPro" id="IPR013815">
    <property type="entry name" value="ATP_grasp_subdomain_1"/>
</dbReference>
<dbReference type="InterPro" id="IPR005811">
    <property type="entry name" value="SUCC_ACL_C"/>
</dbReference>
<dbReference type="InterPro" id="IPR005809">
    <property type="entry name" value="Succ_CoA_ligase-like_bsu"/>
</dbReference>
<dbReference type="InterPro" id="IPR016102">
    <property type="entry name" value="Succinyl-CoA_synth-like"/>
</dbReference>
<dbReference type="NCBIfam" id="NF001913">
    <property type="entry name" value="PRK00696.1"/>
    <property type="match status" value="1"/>
</dbReference>
<dbReference type="NCBIfam" id="TIGR01016">
    <property type="entry name" value="sucCoAbeta"/>
    <property type="match status" value="1"/>
</dbReference>
<dbReference type="PANTHER" id="PTHR11815:SF10">
    <property type="entry name" value="SUCCINATE--COA LIGASE [GDP-FORMING] SUBUNIT BETA, MITOCHONDRIAL"/>
    <property type="match status" value="1"/>
</dbReference>
<dbReference type="PANTHER" id="PTHR11815">
    <property type="entry name" value="SUCCINYL-COA SYNTHETASE BETA CHAIN"/>
    <property type="match status" value="1"/>
</dbReference>
<dbReference type="Pfam" id="PF08442">
    <property type="entry name" value="ATP-grasp_2"/>
    <property type="match status" value="1"/>
</dbReference>
<dbReference type="Pfam" id="PF00549">
    <property type="entry name" value="Ligase_CoA"/>
    <property type="match status" value="1"/>
</dbReference>
<dbReference type="PIRSF" id="PIRSF001554">
    <property type="entry name" value="SucCS_beta"/>
    <property type="match status" value="1"/>
</dbReference>
<dbReference type="SUPFAM" id="SSF56059">
    <property type="entry name" value="Glutathione synthetase ATP-binding domain-like"/>
    <property type="match status" value="1"/>
</dbReference>
<dbReference type="SUPFAM" id="SSF52210">
    <property type="entry name" value="Succinyl-CoA synthetase domains"/>
    <property type="match status" value="1"/>
</dbReference>
<dbReference type="PROSITE" id="PS50975">
    <property type="entry name" value="ATP_GRASP"/>
    <property type="match status" value="1"/>
</dbReference>